<protein>
    <recommendedName>
        <fullName>Mitochondrial import inner membrane translocase subunit TIM9</fullName>
    </recommendedName>
</protein>
<organism>
    <name type="scientific">Candida glabrata (strain ATCC 2001 / BCRC 20586 / JCM 3761 / NBRC 0622 / NRRL Y-65 / CBS 138)</name>
    <name type="common">Yeast</name>
    <name type="synonym">Nakaseomyces glabratus</name>
    <dbReference type="NCBI Taxonomy" id="284593"/>
    <lineage>
        <taxon>Eukaryota</taxon>
        <taxon>Fungi</taxon>
        <taxon>Dikarya</taxon>
        <taxon>Ascomycota</taxon>
        <taxon>Saccharomycotina</taxon>
        <taxon>Saccharomycetes</taxon>
        <taxon>Saccharomycetales</taxon>
        <taxon>Saccharomycetaceae</taxon>
        <taxon>Nakaseomyces</taxon>
    </lineage>
</organism>
<accession>Q6FRT3</accession>
<sequence length="87" mass="10128">MDQLNAKEQQEFQKLVEQKQMKDFMRLYSGLVERCFTDCVNDFTSSKLTSKEESCILKCSEKFLKHSERVGQRFQEQNAALGQGLGR</sequence>
<keyword id="KW-0143">Chaperone</keyword>
<keyword id="KW-1015">Disulfide bond</keyword>
<keyword id="KW-0472">Membrane</keyword>
<keyword id="KW-0479">Metal-binding</keyword>
<keyword id="KW-0496">Mitochondrion</keyword>
<keyword id="KW-0999">Mitochondrion inner membrane</keyword>
<keyword id="KW-0653">Protein transport</keyword>
<keyword id="KW-1185">Reference proteome</keyword>
<keyword id="KW-0811">Translocation</keyword>
<keyword id="KW-0813">Transport</keyword>
<keyword id="KW-0862">Zinc</keyword>
<name>TIM9_CANGA</name>
<gene>
    <name type="primary">TIM9</name>
    <name type="ordered locus">CAGL0H06127g</name>
</gene>
<feature type="chain" id="PRO_0000228042" description="Mitochondrial import inner membrane translocase subunit TIM9">
    <location>
        <begin position="1"/>
        <end position="87"/>
    </location>
</feature>
<feature type="short sequence motif" description="Twin CX3C motif">
    <location>
        <begin position="35"/>
        <end position="59"/>
    </location>
</feature>
<feature type="disulfide bond" evidence="1">
    <location>
        <begin position="35"/>
        <end position="59"/>
    </location>
</feature>
<feature type="disulfide bond" evidence="1">
    <location>
        <begin position="39"/>
        <end position="55"/>
    </location>
</feature>
<evidence type="ECO:0000250" key="1"/>
<evidence type="ECO:0000305" key="2"/>
<reference key="1">
    <citation type="journal article" date="2004" name="Nature">
        <title>Genome evolution in yeasts.</title>
        <authorList>
            <person name="Dujon B."/>
            <person name="Sherman D."/>
            <person name="Fischer G."/>
            <person name="Durrens P."/>
            <person name="Casaregola S."/>
            <person name="Lafontaine I."/>
            <person name="de Montigny J."/>
            <person name="Marck C."/>
            <person name="Neuveglise C."/>
            <person name="Talla E."/>
            <person name="Goffard N."/>
            <person name="Frangeul L."/>
            <person name="Aigle M."/>
            <person name="Anthouard V."/>
            <person name="Babour A."/>
            <person name="Barbe V."/>
            <person name="Barnay S."/>
            <person name="Blanchin S."/>
            <person name="Beckerich J.-M."/>
            <person name="Beyne E."/>
            <person name="Bleykasten C."/>
            <person name="Boisrame A."/>
            <person name="Boyer J."/>
            <person name="Cattolico L."/>
            <person name="Confanioleri F."/>
            <person name="de Daruvar A."/>
            <person name="Despons L."/>
            <person name="Fabre E."/>
            <person name="Fairhead C."/>
            <person name="Ferry-Dumazet H."/>
            <person name="Groppi A."/>
            <person name="Hantraye F."/>
            <person name="Hennequin C."/>
            <person name="Jauniaux N."/>
            <person name="Joyet P."/>
            <person name="Kachouri R."/>
            <person name="Kerrest A."/>
            <person name="Koszul R."/>
            <person name="Lemaire M."/>
            <person name="Lesur I."/>
            <person name="Ma L."/>
            <person name="Muller H."/>
            <person name="Nicaud J.-M."/>
            <person name="Nikolski M."/>
            <person name="Oztas S."/>
            <person name="Ozier-Kalogeropoulos O."/>
            <person name="Pellenz S."/>
            <person name="Potier S."/>
            <person name="Richard G.-F."/>
            <person name="Straub M.-L."/>
            <person name="Suleau A."/>
            <person name="Swennen D."/>
            <person name="Tekaia F."/>
            <person name="Wesolowski-Louvel M."/>
            <person name="Westhof E."/>
            <person name="Wirth B."/>
            <person name="Zeniou-Meyer M."/>
            <person name="Zivanovic Y."/>
            <person name="Bolotin-Fukuhara M."/>
            <person name="Thierry A."/>
            <person name="Bouchier C."/>
            <person name="Caudron B."/>
            <person name="Scarpelli C."/>
            <person name="Gaillardin C."/>
            <person name="Weissenbach J."/>
            <person name="Wincker P."/>
            <person name="Souciet J.-L."/>
        </authorList>
    </citation>
    <scope>NUCLEOTIDE SEQUENCE [LARGE SCALE GENOMIC DNA]</scope>
    <source>
        <strain>ATCC 2001 / BCRC 20586 / JCM 3761 / NBRC 0622 / NRRL Y-65 / CBS 138</strain>
    </source>
</reference>
<dbReference type="EMBL" id="CR380954">
    <property type="protein sequence ID" value="CAG59994.1"/>
    <property type="molecule type" value="Genomic_DNA"/>
</dbReference>
<dbReference type="RefSeq" id="XP_447061.1">
    <property type="nucleotide sequence ID" value="XM_447061.1"/>
</dbReference>
<dbReference type="SMR" id="Q6FRT3"/>
<dbReference type="FunCoup" id="Q6FRT3">
    <property type="interactions" value="960"/>
</dbReference>
<dbReference type="STRING" id="284593.Q6FRT3"/>
<dbReference type="EnsemblFungi" id="CAGL0H06127g-T">
    <property type="protein sequence ID" value="CAGL0H06127g-T-p1"/>
    <property type="gene ID" value="CAGL0H06127g"/>
</dbReference>
<dbReference type="KEGG" id="cgr:2888851"/>
<dbReference type="CGD" id="CAL0130367">
    <property type="gene designation" value="CAGL0H06127g"/>
</dbReference>
<dbReference type="VEuPathDB" id="FungiDB:B1J91_H06127g"/>
<dbReference type="VEuPathDB" id="FungiDB:CAGL0H06127g"/>
<dbReference type="eggNOG" id="KOG3479">
    <property type="taxonomic scope" value="Eukaryota"/>
</dbReference>
<dbReference type="HOGENOM" id="CLU_141397_3_0_1"/>
<dbReference type="InParanoid" id="Q6FRT3"/>
<dbReference type="OMA" id="QDFLRMY"/>
<dbReference type="Proteomes" id="UP000002428">
    <property type="component" value="Chromosome H"/>
</dbReference>
<dbReference type="GO" id="GO:0005576">
    <property type="term" value="C:extracellular region"/>
    <property type="evidence" value="ECO:0000314"/>
    <property type="project" value="CGD"/>
</dbReference>
<dbReference type="GO" id="GO:0042719">
    <property type="term" value="C:mitochondrial intermembrane space protein transporter complex"/>
    <property type="evidence" value="ECO:0007669"/>
    <property type="project" value="EnsemblFungi"/>
</dbReference>
<dbReference type="GO" id="GO:0042721">
    <property type="term" value="C:TIM22 mitochondrial import inner membrane insertion complex"/>
    <property type="evidence" value="ECO:0007669"/>
    <property type="project" value="EnsemblFungi"/>
</dbReference>
<dbReference type="GO" id="GO:0046872">
    <property type="term" value="F:metal ion binding"/>
    <property type="evidence" value="ECO:0007669"/>
    <property type="project" value="UniProtKB-KW"/>
</dbReference>
<dbReference type="GO" id="GO:0140318">
    <property type="term" value="F:protein transporter activity"/>
    <property type="evidence" value="ECO:0007669"/>
    <property type="project" value="EnsemblFungi"/>
</dbReference>
<dbReference type="GO" id="GO:0051082">
    <property type="term" value="F:unfolded protein binding"/>
    <property type="evidence" value="ECO:0007669"/>
    <property type="project" value="EnsemblFungi"/>
</dbReference>
<dbReference type="GO" id="GO:0045039">
    <property type="term" value="P:protein insertion into mitochondrial inner membrane"/>
    <property type="evidence" value="ECO:0007669"/>
    <property type="project" value="EnsemblFungi"/>
</dbReference>
<dbReference type="FunFam" id="1.10.287.810:FF:000008">
    <property type="entry name" value="Mitochondrial import inner membrane translocase subunit TIM9"/>
    <property type="match status" value="1"/>
</dbReference>
<dbReference type="Gene3D" id="1.10.287.810">
    <property type="entry name" value="Mitochondrial import inner membrane translocase subunit tim13 like domains"/>
    <property type="match status" value="1"/>
</dbReference>
<dbReference type="InterPro" id="IPR050673">
    <property type="entry name" value="Mito_inner_translocase_sub"/>
</dbReference>
<dbReference type="InterPro" id="IPR004217">
    <property type="entry name" value="Tim10-like"/>
</dbReference>
<dbReference type="InterPro" id="IPR035427">
    <property type="entry name" value="Tim10-like_dom_sf"/>
</dbReference>
<dbReference type="PANTHER" id="PTHR13172">
    <property type="entry name" value="MITOCHONDRIAL IMPORT INNER MEMBRANE TRANSLOCASE SUBUNIT TIM9B"/>
    <property type="match status" value="1"/>
</dbReference>
<dbReference type="Pfam" id="PF02953">
    <property type="entry name" value="zf-Tim10_DDP"/>
    <property type="match status" value="1"/>
</dbReference>
<dbReference type="SUPFAM" id="SSF144122">
    <property type="entry name" value="Tim10-like"/>
    <property type="match status" value="1"/>
</dbReference>
<proteinExistence type="inferred from homology"/>
<comment type="function">
    <text evidence="1">Mitochondrial intermembrane chaperone that participates in the import and insertion of multi-pass transmembrane proteins into the mitochondrial inner membrane. Also required for the transfer of beta-barrel precursors from the TOM complex to the sorting and assembly machinery (SAM complex) of the outer membrane. Acts as a chaperone-like protein that protects the hydrophobic precursors from aggregation and guide them through the mitochondrial intermembrane space (By similarity).</text>
</comment>
<comment type="subunit">
    <text evidence="1">Heterohexamer; composed of 3 copies of TIM9 and 3 copies of TIM10, named soluble 70 kDa complex. Associates with the TIM22 complex, whose core is composed of TIM22 and TIM54. Interacts with the transmembrane regions of multi-pass transmembrane proteins in transit (By similarity).</text>
</comment>
<comment type="subcellular location">
    <subcellularLocation>
        <location evidence="1">Mitochondrion inner membrane</location>
        <topology evidence="1">Peripheral membrane protein</topology>
        <orientation evidence="1">Intermembrane side</orientation>
    </subcellularLocation>
</comment>
<comment type="domain">
    <text evidence="1">The twin CX3C motif contains 4 conserved Cys residues that form 2 disulfide bonds in the mitochondrial intermembrane space. However, during the transit of TIM9 from cytoplasm into mitochondrion, the Cys residues probably coordinate zinc, thereby preventing folding and allowing its transfer across mitochondrial outer membrane (By similarity).</text>
</comment>
<comment type="similarity">
    <text evidence="2">Belongs to the small Tim family.</text>
</comment>